<reference key="1">
    <citation type="journal article" date="2004" name="J. Gen. Virol.">
        <title>Genetic content of wild-type human cytomegalovirus.</title>
        <authorList>
            <person name="Dolan A."/>
            <person name="Cunningham C."/>
            <person name="Hector R.D."/>
            <person name="Hassan-Walker A.F."/>
            <person name="Lee L."/>
            <person name="Addison C."/>
            <person name="Dargan D.J."/>
            <person name="McGeoch D.J."/>
            <person name="Gatherer D."/>
            <person name="Emery V.C."/>
            <person name="Griffiths P.D."/>
            <person name="Sinzger C."/>
            <person name="McSharry B.P."/>
            <person name="Wilkinson G.W.G."/>
            <person name="Davison A.J."/>
        </authorList>
    </citation>
    <scope>NUCLEOTIDE SEQUENCE [LARGE SCALE GENOMIC DNA]</scope>
</reference>
<gene>
    <name type="primary">UL148B</name>
</gene>
<protein>
    <recommendedName>
        <fullName>Protein UL148B</fullName>
    </recommendedName>
</protein>
<evidence type="ECO:0000255" key="1"/>
<evidence type="ECO:0000305" key="2"/>
<name>U148B_HCMVM</name>
<feature type="chain" id="PRO_0000418262" description="Protein UL148B">
    <location>
        <begin position="1"/>
        <end position="80"/>
    </location>
</feature>
<feature type="transmembrane region" description="Helical" evidence="1">
    <location>
        <begin position="10"/>
        <end position="30"/>
    </location>
</feature>
<organismHost>
    <name type="scientific">Homo sapiens</name>
    <name type="common">Human</name>
    <dbReference type="NCBI Taxonomy" id="9606"/>
</organismHost>
<accession>F5HAK6</accession>
<organism>
    <name type="scientific">Human cytomegalovirus (strain Merlin)</name>
    <name type="common">HHV-5</name>
    <name type="synonym">Human herpesvirus 5</name>
    <dbReference type="NCBI Taxonomy" id="295027"/>
    <lineage>
        <taxon>Viruses</taxon>
        <taxon>Duplodnaviria</taxon>
        <taxon>Heunggongvirae</taxon>
        <taxon>Peploviricota</taxon>
        <taxon>Herviviricetes</taxon>
        <taxon>Herpesvirales</taxon>
        <taxon>Orthoherpesviridae</taxon>
        <taxon>Betaherpesvirinae</taxon>
        <taxon>Cytomegalovirus</taxon>
        <taxon>Cytomegalovirus humanbeta5</taxon>
        <taxon>Human cytomegalovirus</taxon>
    </lineage>
</organism>
<proteinExistence type="predicted"/>
<keyword id="KW-1043">Host membrane</keyword>
<keyword id="KW-0472">Membrane</keyword>
<keyword id="KW-1185">Reference proteome</keyword>
<keyword id="KW-0812">Transmembrane</keyword>
<keyword id="KW-1133">Transmembrane helix</keyword>
<dbReference type="EMBL" id="AY446894">
    <property type="protein sequence ID" value="AAR31687.1"/>
    <property type="molecule type" value="Genomic_DNA"/>
</dbReference>
<dbReference type="RefSeq" id="YP_081583.1">
    <property type="nucleotide sequence ID" value="NC_006273.2"/>
</dbReference>
<dbReference type="DNASU" id="3077453"/>
<dbReference type="GeneID" id="3077453"/>
<dbReference type="KEGG" id="vg:3077453"/>
<dbReference type="Proteomes" id="UP000000938">
    <property type="component" value="Segment"/>
</dbReference>
<dbReference type="GO" id="GO:0033644">
    <property type="term" value="C:host cell membrane"/>
    <property type="evidence" value="ECO:0007669"/>
    <property type="project" value="UniProtKB-SubCell"/>
</dbReference>
<dbReference type="GO" id="GO:0016020">
    <property type="term" value="C:membrane"/>
    <property type="evidence" value="ECO:0007669"/>
    <property type="project" value="UniProtKB-KW"/>
</dbReference>
<comment type="subcellular location">
    <subcellularLocation>
        <location evidence="2">Host membrane</location>
        <topology evidence="2">Single-pass membrane protein</topology>
    </subcellularLocation>
</comment>
<sequence>MALDTLAGLAICVGLVMGVTVIASCALLVFYYCDEREDGRPSKLLQRSIRRWRHGLSTESLTAILPDGSSTEQEIYHTRL</sequence>